<dbReference type="EMBL" id="AL592293">
    <property type="status" value="NOT_ANNOTATED_CDS"/>
    <property type="molecule type" value="Genomic_DNA"/>
</dbReference>
<dbReference type="SMR" id="A8MVJ9"/>
<dbReference type="FunCoup" id="A8MVJ9">
    <property type="interactions" value="498"/>
</dbReference>
<dbReference type="IntAct" id="A8MVJ9">
    <property type="interactions" value="2"/>
</dbReference>
<dbReference type="MINT" id="A8MVJ9"/>
<dbReference type="BioMuta" id="-"/>
<dbReference type="jPOST" id="A8MVJ9"/>
<dbReference type="MassIVE" id="A8MVJ9"/>
<dbReference type="PeptideAtlas" id="A8MVJ9"/>
<dbReference type="neXtProt" id="NX_A8MVJ9"/>
<dbReference type="InParanoid" id="A8MVJ9"/>
<dbReference type="PAN-GO" id="A8MVJ9">
    <property type="GO annotations" value="6 GO annotations based on evolutionary models"/>
</dbReference>
<dbReference type="PhylomeDB" id="A8MVJ9"/>
<dbReference type="PathwayCommons" id="A8MVJ9"/>
<dbReference type="Pharos" id="A8MVJ9">
    <property type="development level" value="Tdark"/>
</dbReference>
<dbReference type="Proteomes" id="UP000005640">
    <property type="component" value="Unplaced"/>
</dbReference>
<dbReference type="RNAct" id="A8MVJ9">
    <property type="molecule type" value="protein"/>
</dbReference>
<dbReference type="GO" id="GO:0005634">
    <property type="term" value="C:nucleus"/>
    <property type="evidence" value="ECO:0000318"/>
    <property type="project" value="GO_Central"/>
</dbReference>
<dbReference type="GO" id="GO:0042393">
    <property type="term" value="F:histone binding"/>
    <property type="evidence" value="ECO:0000318"/>
    <property type="project" value="GO_Central"/>
</dbReference>
<dbReference type="GO" id="GO:0072572">
    <property type="term" value="F:poly-ADP-D-ribose binding"/>
    <property type="evidence" value="ECO:0000318"/>
    <property type="project" value="GO_Central"/>
</dbReference>
<dbReference type="GO" id="GO:0140861">
    <property type="term" value="P:DNA repair-dependent chromatin remodeling"/>
    <property type="evidence" value="ECO:0000318"/>
    <property type="project" value="GO_Central"/>
</dbReference>
<dbReference type="GO" id="GO:0006302">
    <property type="term" value="P:double-strand break repair"/>
    <property type="evidence" value="ECO:0000318"/>
    <property type="project" value="GO_Central"/>
</dbReference>
<dbReference type="InterPro" id="IPR019361">
    <property type="entry name" value="HPF1"/>
</dbReference>
<dbReference type="PANTHER" id="PTHR13386">
    <property type="entry name" value="HISTONE PARYLATION FACTOR 1"/>
    <property type="match status" value="1"/>
</dbReference>
<dbReference type="PANTHER" id="PTHR13386:SF3">
    <property type="entry name" value="HISTONE PARYLATION FACTOR 1-LIKE-RELATED"/>
    <property type="match status" value="1"/>
</dbReference>
<dbReference type="Pfam" id="PF10228">
    <property type="entry name" value="HPF1"/>
    <property type="match status" value="1"/>
</dbReference>
<organism>
    <name type="scientific">Homo sapiens</name>
    <name type="common">Human</name>
    <dbReference type="NCBI Taxonomy" id="9606"/>
    <lineage>
        <taxon>Eukaryota</taxon>
        <taxon>Metazoa</taxon>
        <taxon>Chordata</taxon>
        <taxon>Craniata</taxon>
        <taxon>Vertebrata</taxon>
        <taxon>Euteleostomi</taxon>
        <taxon>Mammalia</taxon>
        <taxon>Eutheria</taxon>
        <taxon>Euarchontoglires</taxon>
        <taxon>Primates</taxon>
        <taxon>Haplorrhini</taxon>
        <taxon>Catarrhini</taxon>
        <taxon>Hominidae</taxon>
        <taxon>Homo</taxon>
    </lineage>
</organism>
<name>HPF1L_HUMAN</name>
<proteinExistence type="uncertain"/>
<sequence>MVGGGWKRRPGAGAGPQCEKTVDVKKSKFCEADVSSDLRKEVENHYTLSLPEDFYHFWKFCEELDSEKPADPLSASLGLQLVDPYNILAGKHKMKKKSTVPNFNLHWRFYYDPPEFQTIIIRDKLSATWGISDRDSPDELPVYVGINEAKKNCIIVPNGDNVFAAVKLYLMKKLKEVTDKKKTNLFKNVDEKLTETARELGYSLEQRTMKMKQRDKKVVTKTFHGTGLVPPVDKNVVGYRELPETDADLKRICKTIVEAASDDERRKAFAPIQEMMTFVQFANDECDYGMGLELGMDLFCYGSHYFHKVAGQLLPLAYNLLKRNLFAEIMKDHLANRRKENIDQFAA</sequence>
<protein>
    <recommendedName>
        <fullName evidence="2">Putative histone PARylation factor 1-like</fullName>
    </recommendedName>
</protein>
<comment type="similarity">
    <text evidence="2">Belongs to the HPF1 family.</text>
</comment>
<comment type="caution">
    <text evidence="2">Could be the product of a pseudogene.</text>
</comment>
<accession>A8MVJ9</accession>
<feature type="chain" id="PRO_0000342626" description="Putative histone PARylation factor 1-like">
    <location>
        <begin position="1"/>
        <end position="347"/>
    </location>
</feature>
<feature type="modified residue" description="N-acetylmethionine" evidence="1">
    <location>
        <position position="1"/>
    </location>
</feature>
<feature type="modified residue" description="N6-acetyllysine" evidence="1">
    <location>
        <position position="187"/>
    </location>
</feature>
<feature type="modified residue" description="N6-acetyllysine" evidence="1">
    <location>
        <position position="234"/>
    </location>
</feature>
<evidence type="ECO:0000250" key="1">
    <source>
        <dbReference type="UniProtKB" id="Q9NWY4"/>
    </source>
</evidence>
<evidence type="ECO:0000305" key="2"/>
<keyword id="KW-0007">Acetylation</keyword>
<keyword id="KW-1267">Proteomics identification</keyword>
<keyword id="KW-1185">Reference proteome</keyword>
<reference key="1">
    <citation type="journal article" date="2004" name="Nature">
        <title>DNA sequence and analysis of human chromosome 9.</title>
        <authorList>
            <person name="Humphray S.J."/>
            <person name="Oliver K."/>
            <person name="Hunt A.R."/>
            <person name="Plumb R.W."/>
            <person name="Loveland J.E."/>
            <person name="Howe K.L."/>
            <person name="Andrews T.D."/>
            <person name="Searle S."/>
            <person name="Hunt S.E."/>
            <person name="Scott C.E."/>
            <person name="Jones M.C."/>
            <person name="Ainscough R."/>
            <person name="Almeida J.P."/>
            <person name="Ambrose K.D."/>
            <person name="Ashwell R.I.S."/>
            <person name="Babbage A.K."/>
            <person name="Babbage S."/>
            <person name="Bagguley C.L."/>
            <person name="Bailey J."/>
            <person name="Banerjee R."/>
            <person name="Barker D.J."/>
            <person name="Barlow K.F."/>
            <person name="Bates K."/>
            <person name="Beasley H."/>
            <person name="Beasley O."/>
            <person name="Bird C.P."/>
            <person name="Bray-Allen S."/>
            <person name="Brown A.J."/>
            <person name="Brown J.Y."/>
            <person name="Burford D."/>
            <person name="Burrill W."/>
            <person name="Burton J."/>
            <person name="Carder C."/>
            <person name="Carter N.P."/>
            <person name="Chapman J.C."/>
            <person name="Chen Y."/>
            <person name="Clarke G."/>
            <person name="Clark S.Y."/>
            <person name="Clee C.M."/>
            <person name="Clegg S."/>
            <person name="Collier R.E."/>
            <person name="Corby N."/>
            <person name="Crosier M."/>
            <person name="Cummings A.T."/>
            <person name="Davies J."/>
            <person name="Dhami P."/>
            <person name="Dunn M."/>
            <person name="Dutta I."/>
            <person name="Dyer L.W."/>
            <person name="Earthrowl M.E."/>
            <person name="Faulkner L."/>
            <person name="Fleming C.J."/>
            <person name="Frankish A."/>
            <person name="Frankland J.A."/>
            <person name="French L."/>
            <person name="Fricker D.G."/>
            <person name="Garner P."/>
            <person name="Garnett J."/>
            <person name="Ghori J."/>
            <person name="Gilbert J.G.R."/>
            <person name="Glison C."/>
            <person name="Grafham D.V."/>
            <person name="Gribble S."/>
            <person name="Griffiths C."/>
            <person name="Griffiths-Jones S."/>
            <person name="Grocock R."/>
            <person name="Guy J."/>
            <person name="Hall R.E."/>
            <person name="Hammond S."/>
            <person name="Harley J.L."/>
            <person name="Harrison E.S.I."/>
            <person name="Hart E.A."/>
            <person name="Heath P.D."/>
            <person name="Henderson C.D."/>
            <person name="Hopkins B.L."/>
            <person name="Howard P.J."/>
            <person name="Howden P.J."/>
            <person name="Huckle E."/>
            <person name="Johnson C."/>
            <person name="Johnson D."/>
            <person name="Joy A.A."/>
            <person name="Kay M."/>
            <person name="Keenan S."/>
            <person name="Kershaw J.K."/>
            <person name="Kimberley A.M."/>
            <person name="King A."/>
            <person name="Knights A."/>
            <person name="Laird G.K."/>
            <person name="Langford C."/>
            <person name="Lawlor S."/>
            <person name="Leongamornlert D.A."/>
            <person name="Leversha M."/>
            <person name="Lloyd C."/>
            <person name="Lloyd D.M."/>
            <person name="Lovell J."/>
            <person name="Martin S."/>
            <person name="Mashreghi-Mohammadi M."/>
            <person name="Matthews L."/>
            <person name="McLaren S."/>
            <person name="McLay K.E."/>
            <person name="McMurray A."/>
            <person name="Milne S."/>
            <person name="Nickerson T."/>
            <person name="Nisbett J."/>
            <person name="Nordsiek G."/>
            <person name="Pearce A.V."/>
            <person name="Peck A.I."/>
            <person name="Porter K.M."/>
            <person name="Pandian R."/>
            <person name="Pelan S."/>
            <person name="Phillimore B."/>
            <person name="Povey S."/>
            <person name="Ramsey Y."/>
            <person name="Rand V."/>
            <person name="Scharfe M."/>
            <person name="Sehra H.K."/>
            <person name="Shownkeen R."/>
            <person name="Sims S.K."/>
            <person name="Skuce C.D."/>
            <person name="Smith M."/>
            <person name="Steward C.A."/>
            <person name="Swarbreck D."/>
            <person name="Sycamore N."/>
            <person name="Tester J."/>
            <person name="Thorpe A."/>
            <person name="Tracey A."/>
            <person name="Tromans A."/>
            <person name="Thomas D.W."/>
            <person name="Wall M."/>
            <person name="Wallis J.M."/>
            <person name="West A.P."/>
            <person name="Whitehead S.L."/>
            <person name="Willey D.L."/>
            <person name="Williams S.A."/>
            <person name="Wilming L."/>
            <person name="Wray P.W."/>
            <person name="Young L."/>
            <person name="Ashurst J.L."/>
            <person name="Coulson A."/>
            <person name="Blocker H."/>
            <person name="Durbin R.M."/>
            <person name="Sulston J.E."/>
            <person name="Hubbard T."/>
            <person name="Jackson M.J."/>
            <person name="Bentley D.R."/>
            <person name="Beck S."/>
            <person name="Rogers J."/>
            <person name="Dunham I."/>
        </authorList>
    </citation>
    <scope>NUCLEOTIDE SEQUENCE [LARGE SCALE GENOMIC DNA]</scope>
</reference>